<accession>O27279</accession>
<feature type="chain" id="PRO_0000148327" description="Putative transport protein MTH_1211">
    <location>
        <begin position="1"/>
        <end position="334"/>
    </location>
</feature>
<feature type="transmembrane region" description="Helical" evidence="1">
    <location>
        <begin position="24"/>
        <end position="44"/>
    </location>
</feature>
<feature type="transmembrane region" description="Helical" evidence="1">
    <location>
        <begin position="60"/>
        <end position="80"/>
    </location>
</feature>
<feature type="transmembrane region" description="Helical" evidence="1">
    <location>
        <begin position="84"/>
        <end position="104"/>
    </location>
</feature>
<feature type="transmembrane region" description="Helical" evidence="1">
    <location>
        <begin position="131"/>
        <end position="151"/>
    </location>
</feature>
<feature type="transmembrane region" description="Helical" evidence="1">
    <location>
        <begin position="189"/>
        <end position="209"/>
    </location>
</feature>
<feature type="transmembrane region" description="Helical" evidence="1">
    <location>
        <begin position="220"/>
        <end position="240"/>
    </location>
</feature>
<feature type="transmembrane region" description="Helical" evidence="1">
    <location>
        <begin position="255"/>
        <end position="275"/>
    </location>
</feature>
<feature type="transmembrane region" description="Helical" evidence="1">
    <location>
        <begin position="289"/>
        <end position="309"/>
    </location>
</feature>
<evidence type="ECO:0000255" key="1"/>
<evidence type="ECO:0000305" key="2"/>
<dbReference type="EMBL" id="AE000666">
    <property type="protein sequence ID" value="AAB85700.1"/>
    <property type="molecule type" value="Genomic_DNA"/>
</dbReference>
<dbReference type="PIR" id="G69028">
    <property type="entry name" value="G69028"/>
</dbReference>
<dbReference type="RefSeq" id="WP_010876835.1">
    <property type="nucleotide sequence ID" value="NC_000916.1"/>
</dbReference>
<dbReference type="SMR" id="O27279"/>
<dbReference type="FunCoup" id="O27279">
    <property type="interactions" value="1"/>
</dbReference>
<dbReference type="STRING" id="187420.MTH_1211"/>
<dbReference type="PaxDb" id="187420-MTH_1211"/>
<dbReference type="EnsemblBacteria" id="AAB85700">
    <property type="protein sequence ID" value="AAB85700"/>
    <property type="gene ID" value="MTH_1211"/>
</dbReference>
<dbReference type="GeneID" id="1471619"/>
<dbReference type="KEGG" id="mth:MTH_1211"/>
<dbReference type="PATRIC" id="fig|187420.15.peg.1189"/>
<dbReference type="HOGENOM" id="CLU_041771_3_0_2"/>
<dbReference type="InParanoid" id="O27279"/>
<dbReference type="Proteomes" id="UP000005223">
    <property type="component" value="Chromosome"/>
</dbReference>
<dbReference type="GO" id="GO:0005886">
    <property type="term" value="C:plasma membrane"/>
    <property type="evidence" value="ECO:0007669"/>
    <property type="project" value="UniProtKB-SubCell"/>
</dbReference>
<dbReference type="InterPro" id="IPR002549">
    <property type="entry name" value="AI-2E-like"/>
</dbReference>
<dbReference type="PANTHER" id="PTHR21716">
    <property type="entry name" value="TRANSMEMBRANE PROTEIN"/>
    <property type="match status" value="1"/>
</dbReference>
<dbReference type="PANTHER" id="PTHR21716:SF4">
    <property type="entry name" value="TRANSMEMBRANE PROTEIN 245"/>
    <property type="match status" value="1"/>
</dbReference>
<dbReference type="Pfam" id="PF01594">
    <property type="entry name" value="AI-2E_transport"/>
    <property type="match status" value="1"/>
</dbReference>
<comment type="subcellular location">
    <subcellularLocation>
        <location evidence="2">Cell membrane</location>
        <topology evidence="2">Multi-pass membrane protein</topology>
    </subcellularLocation>
</comment>
<comment type="similarity">
    <text evidence="2">Belongs to the autoinducer-2 exporter (AI-2E) (TC 2.A.86) family.</text>
</comment>
<gene>
    <name type="ordered locus">MTH_1211</name>
</gene>
<proteinExistence type="inferred from homology"/>
<sequence>MIERLRGALASASFPVMALLLLSAIVVYPLWTMLFLGAVFAYIVRPVALRINRRIPYLSVSIILAMIVVIMPLVGILVFTVDSIINSAPSLLSLAGSIHVPGAGNLQPSAENTLANLRTVLRDILSGSLNYVVAILQSVPMISLQLFVFLSSTFYFARDGKRLVGYIRTLIPEETRPFMERMASETERVLLSIFYGHFLTALAIGLMAAVGFHLLGYPYAILLGIMTGLFQLIPVIGPWAAYTPLSIYDFVTGNILRGVLVLIFGLFLSTIDIYLRPKLSGKYADIHPMIFLVGFLGGPVVWGVAGFIVGPLVLGLAYAALEAYRMESGGEEVQ</sequence>
<organism>
    <name type="scientific">Methanothermobacter thermautotrophicus (strain ATCC 29096 / DSM 1053 / JCM 10044 / NBRC 100330 / Delta H)</name>
    <name type="common">Methanobacterium thermoautotrophicum</name>
    <dbReference type="NCBI Taxonomy" id="187420"/>
    <lineage>
        <taxon>Archaea</taxon>
        <taxon>Methanobacteriati</taxon>
        <taxon>Methanobacteriota</taxon>
        <taxon>Methanomada group</taxon>
        <taxon>Methanobacteria</taxon>
        <taxon>Methanobacteriales</taxon>
        <taxon>Methanobacteriaceae</taxon>
        <taxon>Methanothermobacter</taxon>
    </lineage>
</organism>
<keyword id="KW-1003">Cell membrane</keyword>
<keyword id="KW-0472">Membrane</keyword>
<keyword id="KW-1185">Reference proteome</keyword>
<keyword id="KW-0812">Transmembrane</keyword>
<keyword id="KW-1133">Transmembrane helix</keyword>
<keyword id="KW-0813">Transport</keyword>
<name>Y1211_METTH</name>
<protein>
    <recommendedName>
        <fullName>Putative transport protein MTH_1211</fullName>
    </recommendedName>
</protein>
<reference key="1">
    <citation type="journal article" date="1997" name="J. Bacteriol.">
        <title>Complete genome sequence of Methanobacterium thermoautotrophicum deltaH: functional analysis and comparative genomics.</title>
        <authorList>
            <person name="Smith D.R."/>
            <person name="Doucette-Stamm L.A."/>
            <person name="Deloughery C."/>
            <person name="Lee H.-M."/>
            <person name="Dubois J."/>
            <person name="Aldredge T."/>
            <person name="Bashirzadeh R."/>
            <person name="Blakely D."/>
            <person name="Cook R."/>
            <person name="Gilbert K."/>
            <person name="Harrison D."/>
            <person name="Hoang L."/>
            <person name="Keagle P."/>
            <person name="Lumm W."/>
            <person name="Pothier B."/>
            <person name="Qiu D."/>
            <person name="Spadafora R."/>
            <person name="Vicare R."/>
            <person name="Wang Y."/>
            <person name="Wierzbowski J."/>
            <person name="Gibson R."/>
            <person name="Jiwani N."/>
            <person name="Caruso A."/>
            <person name="Bush D."/>
            <person name="Safer H."/>
            <person name="Patwell D."/>
            <person name="Prabhakar S."/>
            <person name="McDougall S."/>
            <person name="Shimer G."/>
            <person name="Goyal A."/>
            <person name="Pietrovski S."/>
            <person name="Church G.M."/>
            <person name="Daniels C.J."/>
            <person name="Mao J.-I."/>
            <person name="Rice P."/>
            <person name="Noelling J."/>
            <person name="Reeve J.N."/>
        </authorList>
    </citation>
    <scope>NUCLEOTIDE SEQUENCE [LARGE SCALE GENOMIC DNA]</scope>
    <source>
        <strain>ATCC 29096 / DSM 1053 / JCM 10044 / NBRC 100330 / Delta H</strain>
    </source>
</reference>